<proteinExistence type="evidence at transcript level"/>
<sequence>MPFLGQDWRSPGWSWIKTEDGWKRCESCSQKLERENNHCNISHSIILNSEDGEIFNNEEHEYASKKRKKDHFRNDTNTQSFYREKWIYVHKESTKERHGYCTLGEAFNRLDFSSAIQDIRRFNYVVKLLQLIAKSQLTSLSGVAQKNYFNILDKIVQKVLDDHHNPRLIKDLLQDLSSTLCILIRGVGKSVLVGNINIWICRLETILAWQQQLQDLQMTKQVNNGLTLSDLPLHMLNNILYRFSDGWDIITLGQVTPTLYMLSEDRQLWKKLCQYHFAEKQFCRHLILSEKGHIEWKLMYFALQKHYPAKEQYGDTLHFCRHCSILFWKDSGHPCTAADPDSCFTPVSPQHFIDLFKF</sequence>
<evidence type="ECO:0000250" key="1"/>
<name>FBX25_MACFA</name>
<reference key="1">
    <citation type="submission" date="2005-06" db="EMBL/GenBank/DDBJ databases">
        <title>DNA sequences of macaque genes expressed in brain or testis and its evolutionary implications.</title>
        <authorList>
            <consortium name="International consortium for macaque cDNA sequencing and analysis"/>
        </authorList>
    </citation>
    <scope>NUCLEOTIDE SEQUENCE [LARGE SCALE MRNA]</scope>
    <source>
        <tissue>Testis</tissue>
    </source>
</reference>
<keyword id="KW-0009">Actin-binding</keyword>
<keyword id="KW-0539">Nucleus</keyword>
<keyword id="KW-1185">Reference proteome</keyword>
<keyword id="KW-0833">Ubl conjugation pathway</keyword>
<gene>
    <name type="primary">FBXO25</name>
    <name type="ORF">QtsA-19104</name>
</gene>
<accession>Q4R372</accession>
<dbReference type="EMBL" id="AB179395">
    <property type="protein sequence ID" value="BAE02446.1"/>
    <property type="molecule type" value="mRNA"/>
</dbReference>
<dbReference type="RefSeq" id="NP_001271799.1">
    <property type="nucleotide sequence ID" value="NM_001284870.1"/>
</dbReference>
<dbReference type="RefSeq" id="XP_005562553.1">
    <property type="nucleotide sequence ID" value="XM_005562496.2"/>
</dbReference>
<dbReference type="RefSeq" id="XP_015309836.1">
    <property type="nucleotide sequence ID" value="XM_015454350.1"/>
</dbReference>
<dbReference type="RefSeq" id="XP_045253726.1">
    <property type="nucleotide sequence ID" value="XM_045397791.2"/>
</dbReference>
<dbReference type="STRING" id="9541.ENSMFAP00000028215"/>
<dbReference type="Ensembl" id="ENSMFAT00000002415.2">
    <property type="protein sequence ID" value="ENSMFAP00000028226.1"/>
    <property type="gene ID" value="ENSMFAG00000045462.2"/>
</dbReference>
<dbReference type="GeneID" id="101866427"/>
<dbReference type="VEuPathDB" id="HostDB:ENSMFAG00000045462"/>
<dbReference type="eggNOG" id="KOG3926">
    <property type="taxonomic scope" value="Eukaryota"/>
</dbReference>
<dbReference type="GeneTree" id="ENSGT00390000004915"/>
<dbReference type="OMA" id="AWDTMAK"/>
<dbReference type="UniPathway" id="UPA00143"/>
<dbReference type="Proteomes" id="UP000233100">
    <property type="component" value="Chromosome 8"/>
</dbReference>
<dbReference type="Bgee" id="ENSMFAG00000045462">
    <property type="expression patterns" value="Expressed in thymus and 13 other cell types or tissues"/>
</dbReference>
<dbReference type="GO" id="GO:0005737">
    <property type="term" value="C:cytoplasm"/>
    <property type="evidence" value="ECO:0007669"/>
    <property type="project" value="TreeGrafter"/>
</dbReference>
<dbReference type="GO" id="GO:0005634">
    <property type="term" value="C:nucleus"/>
    <property type="evidence" value="ECO:0000250"/>
    <property type="project" value="UniProtKB"/>
</dbReference>
<dbReference type="GO" id="GO:0019005">
    <property type="term" value="C:SCF ubiquitin ligase complex"/>
    <property type="evidence" value="ECO:0000250"/>
    <property type="project" value="UniProtKB"/>
</dbReference>
<dbReference type="GO" id="GO:0003779">
    <property type="term" value="F:actin binding"/>
    <property type="evidence" value="ECO:0007669"/>
    <property type="project" value="UniProtKB-KW"/>
</dbReference>
<dbReference type="GO" id="GO:0016567">
    <property type="term" value="P:protein ubiquitination"/>
    <property type="evidence" value="ECO:0000250"/>
    <property type="project" value="UniProtKB"/>
</dbReference>
<dbReference type="CDD" id="cd22099">
    <property type="entry name" value="F-box_FBXO25"/>
    <property type="match status" value="1"/>
</dbReference>
<dbReference type="Gene3D" id="1.20.1280.50">
    <property type="match status" value="1"/>
</dbReference>
<dbReference type="InterPro" id="IPR036047">
    <property type="entry name" value="F-box-like_dom_sf"/>
</dbReference>
<dbReference type="InterPro" id="IPR040394">
    <property type="entry name" value="FBX25/32"/>
</dbReference>
<dbReference type="PANTHER" id="PTHR13123:SF8">
    <property type="entry name" value="F-BOX ONLY PROTEIN 25"/>
    <property type="match status" value="1"/>
</dbReference>
<dbReference type="PANTHER" id="PTHR13123">
    <property type="entry name" value="LD30288P"/>
    <property type="match status" value="1"/>
</dbReference>
<dbReference type="SUPFAM" id="SSF81383">
    <property type="entry name" value="F-box domain"/>
    <property type="match status" value="1"/>
</dbReference>
<organism>
    <name type="scientific">Macaca fascicularis</name>
    <name type="common">Crab-eating macaque</name>
    <name type="synonym">Cynomolgus monkey</name>
    <dbReference type="NCBI Taxonomy" id="9541"/>
    <lineage>
        <taxon>Eukaryota</taxon>
        <taxon>Metazoa</taxon>
        <taxon>Chordata</taxon>
        <taxon>Craniata</taxon>
        <taxon>Vertebrata</taxon>
        <taxon>Euteleostomi</taxon>
        <taxon>Mammalia</taxon>
        <taxon>Eutheria</taxon>
        <taxon>Euarchontoglires</taxon>
        <taxon>Primates</taxon>
        <taxon>Haplorrhini</taxon>
        <taxon>Catarrhini</taxon>
        <taxon>Cercopithecidae</taxon>
        <taxon>Cercopithecinae</taxon>
        <taxon>Macaca</taxon>
    </lineage>
</organism>
<comment type="function">
    <text evidence="1">Substrate-recognition component of the SCF (SKP1-CUL1-F-box protein)-type E3 ubiquitin ligase complex. May play a role in accumulation of expanded polyglutamine (polyQ) protein huntingtin (HTT) (By similarity).</text>
</comment>
<comment type="pathway">
    <text>Protein modification; protein ubiquitination.</text>
</comment>
<comment type="subunit">
    <text evidence="1">Part of a SCF (SKP1-cullin-F-box) protein ligase complex consisting of FBXO25, SKP1, CUL1 and RBX1. Interacts directly with SKP1 and CUL1. Interacts (via C-terminus) with beta-actin (via N-terminus).</text>
</comment>
<comment type="subcellular location">
    <subcellularLocation>
        <location evidence="1">Nucleus</location>
    </subcellularLocation>
    <text evidence="1">In the nucleus, associates with a subnuclear dot-like structure.</text>
</comment>
<comment type="domain">
    <text evidence="1">The F-box is necessary for the interaction with SKP1.</text>
</comment>
<protein>
    <recommendedName>
        <fullName>F-box only protein 25</fullName>
    </recommendedName>
</protein>
<feature type="chain" id="PRO_0000278286" description="F-box only protein 25">
    <location>
        <begin position="1"/>
        <end position="358"/>
    </location>
</feature>
<feature type="domain" description="F-box">
    <location>
        <begin position="226"/>
        <end position="274"/>
    </location>
</feature>
<feature type="region of interest" description="Interaction with beta-actin">
    <location>
        <begin position="1"/>
        <end position="83"/>
    </location>
</feature>